<accession>B7J2E8</accession>
<reference key="1">
    <citation type="journal article" date="2011" name="J. Bacteriol.">
        <title>Whole-genome sequences of thirteen isolates of Borrelia burgdorferi.</title>
        <authorList>
            <person name="Schutzer S.E."/>
            <person name="Fraser-Liggett C.M."/>
            <person name="Casjens S.R."/>
            <person name="Qiu W.G."/>
            <person name="Dunn J.J."/>
            <person name="Mongodin E.F."/>
            <person name="Luft B.J."/>
        </authorList>
    </citation>
    <scope>NUCLEOTIDE SEQUENCE [LARGE SCALE GENOMIC DNA]</scope>
    <source>
        <strain>ZS7</strain>
    </source>
</reference>
<feature type="chain" id="PRO_1000130831" description="UDP-N-acetylmuramoylalanine--D-glutamate ligase">
    <location>
        <begin position="1"/>
        <end position="451"/>
    </location>
</feature>
<feature type="binding site" evidence="1">
    <location>
        <begin position="118"/>
        <end position="124"/>
    </location>
    <ligand>
        <name>ATP</name>
        <dbReference type="ChEBI" id="CHEBI:30616"/>
    </ligand>
</feature>
<keyword id="KW-0067">ATP-binding</keyword>
<keyword id="KW-0131">Cell cycle</keyword>
<keyword id="KW-0132">Cell division</keyword>
<keyword id="KW-0133">Cell shape</keyword>
<keyword id="KW-0961">Cell wall biogenesis/degradation</keyword>
<keyword id="KW-0963">Cytoplasm</keyword>
<keyword id="KW-0436">Ligase</keyword>
<keyword id="KW-0547">Nucleotide-binding</keyword>
<keyword id="KW-0573">Peptidoglycan synthesis</keyword>
<gene>
    <name evidence="1" type="primary">murD</name>
    <name type="ordered locus">BbuZS7_0598</name>
</gene>
<name>MURD_BORBZ</name>
<protein>
    <recommendedName>
        <fullName evidence="1">UDP-N-acetylmuramoylalanine--D-glutamate ligase</fullName>
        <ecNumber evidence="1">6.3.2.9</ecNumber>
    </recommendedName>
    <alternativeName>
        <fullName evidence="1">D-glutamic acid-adding enzyme</fullName>
    </alternativeName>
    <alternativeName>
        <fullName evidence="1">UDP-N-acetylmuramoyl-L-alanyl-D-glutamate synthetase</fullName>
    </alternativeName>
</protein>
<comment type="function">
    <text evidence="1">Cell wall formation. Catalyzes the addition of glutamate to the nucleotide precursor UDP-N-acetylmuramoyl-L-alanine (UMA).</text>
</comment>
<comment type="catalytic activity">
    <reaction evidence="1">
        <text>UDP-N-acetyl-alpha-D-muramoyl-L-alanine + D-glutamate + ATP = UDP-N-acetyl-alpha-D-muramoyl-L-alanyl-D-glutamate + ADP + phosphate + H(+)</text>
        <dbReference type="Rhea" id="RHEA:16429"/>
        <dbReference type="ChEBI" id="CHEBI:15378"/>
        <dbReference type="ChEBI" id="CHEBI:29986"/>
        <dbReference type="ChEBI" id="CHEBI:30616"/>
        <dbReference type="ChEBI" id="CHEBI:43474"/>
        <dbReference type="ChEBI" id="CHEBI:83898"/>
        <dbReference type="ChEBI" id="CHEBI:83900"/>
        <dbReference type="ChEBI" id="CHEBI:456216"/>
        <dbReference type="EC" id="6.3.2.9"/>
    </reaction>
</comment>
<comment type="pathway">
    <text evidence="1">Cell wall biogenesis; peptidoglycan biosynthesis.</text>
</comment>
<comment type="subcellular location">
    <subcellularLocation>
        <location evidence="1">Cytoplasm</location>
    </subcellularLocation>
</comment>
<comment type="similarity">
    <text evidence="1">Belongs to the MurCDEF family.</text>
</comment>
<sequence length="451" mass="51038">MLLDEIKNLNFLIMGLGLNGGGVALSRFLLKRGAKLVITDLKSETELALSIDALRDFEDQIRYVLGKHDVNDFKNADIVVKNPGVKPNNKYLKFAKRIETDISLFLMFNKNPIVAVTGTKGKSTLVSLLYQALKEKYPGVKLGGNIGVSPLSFFDQLDGKSPLILELSSWQLQSLENFNPIISIITNVYNDHQNYYLNFDDYIIDKSKIFVNQTSGIVIIQDQAYCKYFSKFKSKVRVILFSEFNPCDFDQDIFYCNEGKVYFNGNLIGSFSNSRAVFIIPKVITFFVSYYLNIDLNRTGQILSNFKGIEHRLEFVKSVQNVMFYNDTASTIPESTVLSVKSLKTKDNRINLIVGGTDKELDFLSFSKIADIVRTWILIRGSATVKIIKILEKSSIQYFLFDSLRDAVNYAFKISSPGDIVLFSPASASFELFNNEFDRGLQFKNLVNNLG</sequence>
<proteinExistence type="inferred from homology"/>
<evidence type="ECO:0000255" key="1">
    <source>
        <dbReference type="HAMAP-Rule" id="MF_00639"/>
    </source>
</evidence>
<organism>
    <name type="scientific">Borreliella burgdorferi (strain ZS7)</name>
    <name type="common">Borrelia burgdorferi</name>
    <dbReference type="NCBI Taxonomy" id="445985"/>
    <lineage>
        <taxon>Bacteria</taxon>
        <taxon>Pseudomonadati</taxon>
        <taxon>Spirochaetota</taxon>
        <taxon>Spirochaetia</taxon>
        <taxon>Spirochaetales</taxon>
        <taxon>Borreliaceae</taxon>
        <taxon>Borreliella</taxon>
    </lineage>
</organism>
<dbReference type="EC" id="6.3.2.9" evidence="1"/>
<dbReference type="EMBL" id="CP001205">
    <property type="protein sequence ID" value="ACK75178.1"/>
    <property type="molecule type" value="Genomic_DNA"/>
</dbReference>
<dbReference type="RefSeq" id="WP_002658080.1">
    <property type="nucleotide sequence ID" value="NC_011728.1"/>
</dbReference>
<dbReference type="SMR" id="B7J2E8"/>
<dbReference type="GeneID" id="56568018"/>
<dbReference type="KEGG" id="bbz:BbuZS7_0598"/>
<dbReference type="HOGENOM" id="CLU_032540_0_1_12"/>
<dbReference type="UniPathway" id="UPA00219"/>
<dbReference type="Proteomes" id="UP000006901">
    <property type="component" value="Chromosome"/>
</dbReference>
<dbReference type="GO" id="GO:0005737">
    <property type="term" value="C:cytoplasm"/>
    <property type="evidence" value="ECO:0007669"/>
    <property type="project" value="UniProtKB-SubCell"/>
</dbReference>
<dbReference type="GO" id="GO:0005524">
    <property type="term" value="F:ATP binding"/>
    <property type="evidence" value="ECO:0007669"/>
    <property type="project" value="UniProtKB-UniRule"/>
</dbReference>
<dbReference type="GO" id="GO:0008764">
    <property type="term" value="F:UDP-N-acetylmuramoylalanine-D-glutamate ligase activity"/>
    <property type="evidence" value="ECO:0007669"/>
    <property type="project" value="UniProtKB-UniRule"/>
</dbReference>
<dbReference type="GO" id="GO:0051301">
    <property type="term" value="P:cell division"/>
    <property type="evidence" value="ECO:0007669"/>
    <property type="project" value="UniProtKB-KW"/>
</dbReference>
<dbReference type="GO" id="GO:0071555">
    <property type="term" value="P:cell wall organization"/>
    <property type="evidence" value="ECO:0007669"/>
    <property type="project" value="UniProtKB-KW"/>
</dbReference>
<dbReference type="GO" id="GO:0009252">
    <property type="term" value="P:peptidoglycan biosynthetic process"/>
    <property type="evidence" value="ECO:0007669"/>
    <property type="project" value="UniProtKB-UniRule"/>
</dbReference>
<dbReference type="GO" id="GO:0008360">
    <property type="term" value="P:regulation of cell shape"/>
    <property type="evidence" value="ECO:0007669"/>
    <property type="project" value="UniProtKB-KW"/>
</dbReference>
<dbReference type="Gene3D" id="3.90.190.20">
    <property type="entry name" value="Mur ligase, C-terminal domain"/>
    <property type="match status" value="1"/>
</dbReference>
<dbReference type="Gene3D" id="3.40.1190.10">
    <property type="entry name" value="Mur-like, catalytic domain"/>
    <property type="match status" value="1"/>
</dbReference>
<dbReference type="Gene3D" id="3.40.50.720">
    <property type="entry name" value="NAD(P)-binding Rossmann-like Domain"/>
    <property type="match status" value="1"/>
</dbReference>
<dbReference type="HAMAP" id="MF_00639">
    <property type="entry name" value="MurD"/>
    <property type="match status" value="1"/>
</dbReference>
<dbReference type="InterPro" id="IPR036565">
    <property type="entry name" value="Mur-like_cat_sf"/>
</dbReference>
<dbReference type="InterPro" id="IPR004101">
    <property type="entry name" value="Mur_ligase_C"/>
</dbReference>
<dbReference type="InterPro" id="IPR036615">
    <property type="entry name" value="Mur_ligase_C_dom_sf"/>
</dbReference>
<dbReference type="InterPro" id="IPR013221">
    <property type="entry name" value="Mur_ligase_cen"/>
</dbReference>
<dbReference type="InterPro" id="IPR005762">
    <property type="entry name" value="MurD"/>
</dbReference>
<dbReference type="NCBIfam" id="TIGR01087">
    <property type="entry name" value="murD"/>
    <property type="match status" value="1"/>
</dbReference>
<dbReference type="PANTHER" id="PTHR43692">
    <property type="entry name" value="UDP-N-ACETYLMURAMOYLALANINE--D-GLUTAMATE LIGASE"/>
    <property type="match status" value="1"/>
</dbReference>
<dbReference type="PANTHER" id="PTHR43692:SF1">
    <property type="entry name" value="UDP-N-ACETYLMURAMOYLALANINE--D-GLUTAMATE LIGASE"/>
    <property type="match status" value="1"/>
</dbReference>
<dbReference type="Pfam" id="PF02875">
    <property type="entry name" value="Mur_ligase_C"/>
    <property type="match status" value="1"/>
</dbReference>
<dbReference type="Pfam" id="PF08245">
    <property type="entry name" value="Mur_ligase_M"/>
    <property type="match status" value="1"/>
</dbReference>
<dbReference type="Pfam" id="PF21799">
    <property type="entry name" value="MurD-like_N"/>
    <property type="match status" value="1"/>
</dbReference>
<dbReference type="SUPFAM" id="SSF51984">
    <property type="entry name" value="MurCD N-terminal domain"/>
    <property type="match status" value="1"/>
</dbReference>
<dbReference type="SUPFAM" id="SSF53623">
    <property type="entry name" value="MurD-like peptide ligases, catalytic domain"/>
    <property type="match status" value="1"/>
</dbReference>
<dbReference type="SUPFAM" id="SSF53244">
    <property type="entry name" value="MurD-like peptide ligases, peptide-binding domain"/>
    <property type="match status" value="1"/>
</dbReference>